<keyword id="KW-0687">Ribonucleoprotein</keyword>
<keyword id="KW-0689">Ribosomal protein</keyword>
<keyword id="KW-0694">RNA-binding</keyword>
<keyword id="KW-0699">rRNA-binding</keyword>
<dbReference type="EMBL" id="CP000554">
    <property type="protein sequence ID" value="ABM79040.1"/>
    <property type="molecule type" value="Genomic_DNA"/>
</dbReference>
<dbReference type="RefSeq" id="WP_011826908.1">
    <property type="nucleotide sequence ID" value="NC_008820.1"/>
</dbReference>
<dbReference type="SMR" id="A2CC30"/>
<dbReference type="STRING" id="59922.P9303_23051"/>
<dbReference type="KEGG" id="pmf:P9303_23051"/>
<dbReference type="HOGENOM" id="CLU_036235_2_1_3"/>
<dbReference type="BioCyc" id="PMAR59922:G1G80-2022-MONOMER"/>
<dbReference type="Proteomes" id="UP000002274">
    <property type="component" value="Chromosome"/>
</dbReference>
<dbReference type="GO" id="GO:0015934">
    <property type="term" value="C:large ribosomal subunit"/>
    <property type="evidence" value="ECO:0007669"/>
    <property type="project" value="InterPro"/>
</dbReference>
<dbReference type="GO" id="GO:0019843">
    <property type="term" value="F:rRNA binding"/>
    <property type="evidence" value="ECO:0007669"/>
    <property type="project" value="UniProtKB-UniRule"/>
</dbReference>
<dbReference type="GO" id="GO:0003735">
    <property type="term" value="F:structural constituent of ribosome"/>
    <property type="evidence" value="ECO:0007669"/>
    <property type="project" value="InterPro"/>
</dbReference>
<dbReference type="GO" id="GO:0016740">
    <property type="term" value="F:transferase activity"/>
    <property type="evidence" value="ECO:0007669"/>
    <property type="project" value="InterPro"/>
</dbReference>
<dbReference type="GO" id="GO:0006412">
    <property type="term" value="P:translation"/>
    <property type="evidence" value="ECO:0007669"/>
    <property type="project" value="UniProtKB-UniRule"/>
</dbReference>
<dbReference type="FunFam" id="2.30.30.30:FF:000001">
    <property type="entry name" value="50S ribosomal protein L2"/>
    <property type="match status" value="1"/>
</dbReference>
<dbReference type="FunFam" id="2.40.50.140:FF:000003">
    <property type="entry name" value="50S ribosomal protein L2"/>
    <property type="match status" value="1"/>
</dbReference>
<dbReference type="FunFam" id="4.10.950.10:FF:000001">
    <property type="entry name" value="50S ribosomal protein L2"/>
    <property type="match status" value="1"/>
</dbReference>
<dbReference type="Gene3D" id="2.30.30.30">
    <property type="match status" value="1"/>
</dbReference>
<dbReference type="Gene3D" id="2.40.50.140">
    <property type="entry name" value="Nucleic acid-binding proteins"/>
    <property type="match status" value="1"/>
</dbReference>
<dbReference type="Gene3D" id="4.10.950.10">
    <property type="entry name" value="Ribosomal protein L2, domain 3"/>
    <property type="match status" value="1"/>
</dbReference>
<dbReference type="HAMAP" id="MF_01320_B">
    <property type="entry name" value="Ribosomal_uL2_B"/>
    <property type="match status" value="1"/>
</dbReference>
<dbReference type="InterPro" id="IPR012340">
    <property type="entry name" value="NA-bd_OB-fold"/>
</dbReference>
<dbReference type="InterPro" id="IPR014722">
    <property type="entry name" value="Rib_uL2_dom2"/>
</dbReference>
<dbReference type="InterPro" id="IPR002171">
    <property type="entry name" value="Ribosomal_uL2"/>
</dbReference>
<dbReference type="InterPro" id="IPR005880">
    <property type="entry name" value="Ribosomal_uL2_bac/org-type"/>
</dbReference>
<dbReference type="InterPro" id="IPR022669">
    <property type="entry name" value="Ribosomal_uL2_C"/>
</dbReference>
<dbReference type="InterPro" id="IPR022671">
    <property type="entry name" value="Ribosomal_uL2_CS"/>
</dbReference>
<dbReference type="InterPro" id="IPR014726">
    <property type="entry name" value="Ribosomal_uL2_dom3"/>
</dbReference>
<dbReference type="InterPro" id="IPR022666">
    <property type="entry name" value="Ribosomal_uL2_RNA-bd_dom"/>
</dbReference>
<dbReference type="InterPro" id="IPR008991">
    <property type="entry name" value="Translation_prot_SH3-like_sf"/>
</dbReference>
<dbReference type="NCBIfam" id="TIGR01171">
    <property type="entry name" value="rplB_bact"/>
    <property type="match status" value="1"/>
</dbReference>
<dbReference type="PANTHER" id="PTHR13691:SF5">
    <property type="entry name" value="LARGE RIBOSOMAL SUBUNIT PROTEIN UL2M"/>
    <property type="match status" value="1"/>
</dbReference>
<dbReference type="PANTHER" id="PTHR13691">
    <property type="entry name" value="RIBOSOMAL PROTEIN L2"/>
    <property type="match status" value="1"/>
</dbReference>
<dbReference type="Pfam" id="PF00181">
    <property type="entry name" value="Ribosomal_L2"/>
    <property type="match status" value="1"/>
</dbReference>
<dbReference type="Pfam" id="PF03947">
    <property type="entry name" value="Ribosomal_L2_C"/>
    <property type="match status" value="1"/>
</dbReference>
<dbReference type="PIRSF" id="PIRSF002158">
    <property type="entry name" value="Ribosomal_L2"/>
    <property type="match status" value="1"/>
</dbReference>
<dbReference type="SMART" id="SM01383">
    <property type="entry name" value="Ribosomal_L2"/>
    <property type="match status" value="1"/>
</dbReference>
<dbReference type="SMART" id="SM01382">
    <property type="entry name" value="Ribosomal_L2_C"/>
    <property type="match status" value="1"/>
</dbReference>
<dbReference type="SUPFAM" id="SSF50249">
    <property type="entry name" value="Nucleic acid-binding proteins"/>
    <property type="match status" value="1"/>
</dbReference>
<dbReference type="SUPFAM" id="SSF50104">
    <property type="entry name" value="Translation proteins SH3-like domain"/>
    <property type="match status" value="1"/>
</dbReference>
<dbReference type="PROSITE" id="PS00467">
    <property type="entry name" value="RIBOSOMAL_L2"/>
    <property type="match status" value="1"/>
</dbReference>
<gene>
    <name evidence="1" type="primary">rplB</name>
    <name evidence="1" type="synonym">rpl2</name>
    <name type="ordered locus">P9303_23051</name>
</gene>
<proteinExistence type="inferred from homology"/>
<evidence type="ECO:0000255" key="1">
    <source>
        <dbReference type="HAMAP-Rule" id="MF_01320"/>
    </source>
</evidence>
<evidence type="ECO:0000256" key="2">
    <source>
        <dbReference type="SAM" id="MobiDB-lite"/>
    </source>
</evidence>
<evidence type="ECO:0000305" key="3"/>
<organism>
    <name type="scientific">Prochlorococcus marinus (strain MIT 9303)</name>
    <dbReference type="NCBI Taxonomy" id="59922"/>
    <lineage>
        <taxon>Bacteria</taxon>
        <taxon>Bacillati</taxon>
        <taxon>Cyanobacteriota</taxon>
        <taxon>Cyanophyceae</taxon>
        <taxon>Synechococcales</taxon>
        <taxon>Prochlorococcaceae</taxon>
        <taxon>Prochlorococcus</taxon>
    </lineage>
</organism>
<name>RL2_PROM3</name>
<protein>
    <recommendedName>
        <fullName evidence="1">Large ribosomal subunit protein uL2</fullName>
    </recommendedName>
    <alternativeName>
        <fullName evidence="3">50S ribosomal protein L2</fullName>
    </alternativeName>
</protein>
<reference key="1">
    <citation type="journal article" date="2007" name="PLoS Genet.">
        <title>Patterns and implications of gene gain and loss in the evolution of Prochlorococcus.</title>
        <authorList>
            <person name="Kettler G.C."/>
            <person name="Martiny A.C."/>
            <person name="Huang K."/>
            <person name="Zucker J."/>
            <person name="Coleman M.L."/>
            <person name="Rodrigue S."/>
            <person name="Chen F."/>
            <person name="Lapidus A."/>
            <person name="Ferriera S."/>
            <person name="Johnson J."/>
            <person name="Steglich C."/>
            <person name="Church G.M."/>
            <person name="Richardson P."/>
            <person name="Chisholm S.W."/>
        </authorList>
    </citation>
    <scope>NUCLEOTIDE SEQUENCE [LARGE SCALE GENOMIC DNA]</scope>
    <source>
        <strain>MIT 9303</strain>
    </source>
</reference>
<comment type="function">
    <text evidence="1">One of the primary rRNA binding proteins. Required for association of the 30S and 50S subunits to form the 70S ribosome, for tRNA binding and peptide bond formation. It has been suggested to have peptidyltransferase activity; this is somewhat controversial. Makes several contacts with the 16S rRNA in the 70S ribosome.</text>
</comment>
<comment type="subunit">
    <text evidence="1">Part of the 50S ribosomal subunit. Forms a bridge to the 30S subunit in the 70S ribosome.</text>
</comment>
<comment type="similarity">
    <text evidence="1">Belongs to the universal ribosomal protein uL2 family.</text>
</comment>
<feature type="chain" id="PRO_0000309983" description="Large ribosomal subunit protein uL2">
    <location>
        <begin position="1"/>
        <end position="287"/>
    </location>
</feature>
<feature type="region of interest" description="Disordered" evidence="2">
    <location>
        <begin position="221"/>
        <end position="287"/>
    </location>
</feature>
<feature type="compositionally biased region" description="Basic residues" evidence="2">
    <location>
        <begin position="258"/>
        <end position="287"/>
    </location>
</feature>
<sequence length="287" mass="31744">MAIRTFRPYTPGTRTRVVTDFNEVTGRKPERSLVVAKHRRKGRNNRGVITCRHRGGGHKRLYRIVDFRRNKHGIPAKVAAIHYDPHRNAHLALLFYTDGEKRYILAPNGIAIGQQLISGPESPIETGNALPLSAIPLGSSVHNVELYAGRGGQMARTAGSSAQVMAKEGDYVALKLPSTEVRLVRHECYATLGEVGNSEVRNTSLGKAGRRRWLGRRPQVRGSVMNPCDHPHGGGEGRAPIGRSGPVTPWGKPALGLKTRKRNKPSNRFVLRKRRRTSKRSRGGRDS</sequence>
<accession>A2CC30</accession>